<keyword id="KW-0028">Amino-acid biosynthesis</keyword>
<keyword id="KW-0057">Aromatic amino acid biosynthesis</keyword>
<keyword id="KW-0520">NAD</keyword>
<keyword id="KW-0521">NADP</keyword>
<keyword id="KW-0560">Oxidoreductase</keyword>
<accession>A8A0N8</accession>
<feature type="chain" id="PRO_1000069269" description="Quinate/shikimate dehydrogenase">
    <location>
        <begin position="1"/>
        <end position="288"/>
    </location>
</feature>
<feature type="binding site" evidence="1">
    <location>
        <position position="71"/>
    </location>
    <ligand>
        <name>substrate</name>
    </ligand>
</feature>
<feature type="binding site" evidence="1">
    <location>
        <position position="107"/>
    </location>
    <ligand>
        <name>substrate</name>
    </ligand>
</feature>
<feature type="binding site" evidence="1">
    <location>
        <begin position="132"/>
        <end position="135"/>
    </location>
    <ligand>
        <name>NAD(+)</name>
        <dbReference type="ChEBI" id="CHEBI:57540"/>
    </ligand>
</feature>
<feature type="binding site" evidence="1">
    <location>
        <begin position="155"/>
        <end position="158"/>
    </location>
    <ligand>
        <name>NAD(+)</name>
        <dbReference type="ChEBI" id="CHEBI:57540"/>
    </ligand>
</feature>
<feature type="binding site" evidence="1">
    <location>
        <position position="205"/>
    </location>
    <ligand>
        <name>NAD(+)</name>
        <dbReference type="ChEBI" id="CHEBI:57540"/>
    </ligand>
</feature>
<feature type="binding site" evidence="1">
    <location>
        <begin position="232"/>
        <end position="235"/>
    </location>
    <ligand>
        <name>NAD(+)</name>
        <dbReference type="ChEBI" id="CHEBI:57540"/>
    </ligand>
</feature>
<feature type="binding site" evidence="1">
    <location>
        <position position="255"/>
    </location>
    <ligand>
        <name>NAD(+)</name>
        <dbReference type="ChEBI" id="CHEBI:57540"/>
    </ligand>
</feature>
<comment type="function">
    <text evidence="1">The actual biological function of YdiB remains unclear, nor is it known whether 3-dehydroshikimate or quinate represents the natural substrate. Catalyzes the reversible NAD-dependent reduction of both 3-dehydroshikimate (DHSA) and 3-dehydroquinate to yield shikimate (SA) and quinate, respectively. It can use both NAD or NADP for catalysis, however it has higher catalytic efficiency with NAD.</text>
</comment>
<comment type="catalytic activity">
    <reaction evidence="1">
        <text>L-quinate + NAD(+) = 3-dehydroquinate + NADH + H(+)</text>
        <dbReference type="Rhea" id="RHEA:22364"/>
        <dbReference type="ChEBI" id="CHEBI:15378"/>
        <dbReference type="ChEBI" id="CHEBI:29751"/>
        <dbReference type="ChEBI" id="CHEBI:32364"/>
        <dbReference type="ChEBI" id="CHEBI:57540"/>
        <dbReference type="ChEBI" id="CHEBI:57945"/>
        <dbReference type="EC" id="1.1.1.282"/>
    </reaction>
</comment>
<comment type="catalytic activity">
    <reaction evidence="1">
        <text>L-quinate + NADP(+) = 3-dehydroquinate + NADPH + H(+)</text>
        <dbReference type="Rhea" id="RHEA:18425"/>
        <dbReference type="ChEBI" id="CHEBI:15378"/>
        <dbReference type="ChEBI" id="CHEBI:29751"/>
        <dbReference type="ChEBI" id="CHEBI:32364"/>
        <dbReference type="ChEBI" id="CHEBI:57783"/>
        <dbReference type="ChEBI" id="CHEBI:58349"/>
        <dbReference type="EC" id="1.1.1.282"/>
    </reaction>
</comment>
<comment type="catalytic activity">
    <reaction evidence="1">
        <text>shikimate + NADP(+) = 3-dehydroshikimate + NADPH + H(+)</text>
        <dbReference type="Rhea" id="RHEA:17737"/>
        <dbReference type="ChEBI" id="CHEBI:15378"/>
        <dbReference type="ChEBI" id="CHEBI:16630"/>
        <dbReference type="ChEBI" id="CHEBI:36208"/>
        <dbReference type="ChEBI" id="CHEBI:57783"/>
        <dbReference type="ChEBI" id="CHEBI:58349"/>
        <dbReference type="EC" id="1.1.1.282"/>
    </reaction>
</comment>
<comment type="catalytic activity">
    <reaction evidence="1">
        <text>shikimate + NAD(+) = 3-dehydroshikimate + NADH + H(+)</text>
        <dbReference type="Rhea" id="RHEA:17741"/>
        <dbReference type="ChEBI" id="CHEBI:15378"/>
        <dbReference type="ChEBI" id="CHEBI:16630"/>
        <dbReference type="ChEBI" id="CHEBI:36208"/>
        <dbReference type="ChEBI" id="CHEBI:57540"/>
        <dbReference type="ChEBI" id="CHEBI:57945"/>
        <dbReference type="EC" id="1.1.1.282"/>
    </reaction>
</comment>
<comment type="pathway">
    <text evidence="1">Metabolic intermediate biosynthesis; chorismate biosynthesis; chorismate from D-erythrose 4-phosphate and phosphoenolpyruvate: step 4/7.</text>
</comment>
<comment type="subunit">
    <text evidence="1">Homodimer.</text>
</comment>
<comment type="similarity">
    <text evidence="1">Belongs to the shikimate dehydrogenase family.</text>
</comment>
<name>YDIB_ECOHS</name>
<protein>
    <recommendedName>
        <fullName evidence="1">Quinate/shikimate dehydrogenase</fullName>
        <ecNumber evidence="1">1.1.1.282</ecNumber>
    </recommendedName>
    <alternativeName>
        <fullName evidence="1">NAD-dependent shikimate 5-dehydrogenase</fullName>
    </alternativeName>
</protein>
<dbReference type="EC" id="1.1.1.282" evidence="1"/>
<dbReference type="EMBL" id="CP000802">
    <property type="protein sequence ID" value="ABV06092.1"/>
    <property type="molecule type" value="Genomic_DNA"/>
</dbReference>
<dbReference type="RefSeq" id="WP_000383469.1">
    <property type="nucleotide sequence ID" value="NC_009800.1"/>
</dbReference>
<dbReference type="SMR" id="A8A0N8"/>
<dbReference type="GeneID" id="75171755"/>
<dbReference type="KEGG" id="ecx:EcHS_A1773"/>
<dbReference type="HOGENOM" id="CLU_044063_4_4_6"/>
<dbReference type="UniPathway" id="UPA00053">
    <property type="reaction ID" value="UER00087"/>
</dbReference>
<dbReference type="GO" id="GO:0030266">
    <property type="term" value="F:quinate 3-dehydrogenase (NAD+) activity"/>
    <property type="evidence" value="ECO:0007669"/>
    <property type="project" value="UniProtKB-UniRule"/>
</dbReference>
<dbReference type="GO" id="GO:0052733">
    <property type="term" value="F:quinate 3-dehydrogenase (NADP+) activity"/>
    <property type="evidence" value="ECO:0007669"/>
    <property type="project" value="InterPro"/>
</dbReference>
<dbReference type="GO" id="GO:0052734">
    <property type="term" value="F:shikimate 3-dehydrogenase (NAD+) activity"/>
    <property type="evidence" value="ECO:0007669"/>
    <property type="project" value="InterPro"/>
</dbReference>
<dbReference type="GO" id="GO:0004764">
    <property type="term" value="F:shikimate 3-dehydrogenase (NADP+) activity"/>
    <property type="evidence" value="ECO:0007669"/>
    <property type="project" value="UniProtKB-UniRule"/>
</dbReference>
<dbReference type="GO" id="GO:0008652">
    <property type="term" value="P:amino acid biosynthetic process"/>
    <property type="evidence" value="ECO:0007669"/>
    <property type="project" value="UniProtKB-KW"/>
</dbReference>
<dbReference type="GO" id="GO:0009073">
    <property type="term" value="P:aromatic amino acid family biosynthetic process"/>
    <property type="evidence" value="ECO:0007669"/>
    <property type="project" value="UniProtKB-KW"/>
</dbReference>
<dbReference type="GO" id="GO:0009423">
    <property type="term" value="P:chorismate biosynthetic process"/>
    <property type="evidence" value="ECO:0007669"/>
    <property type="project" value="UniProtKB-UniRule"/>
</dbReference>
<dbReference type="GO" id="GO:0019632">
    <property type="term" value="P:shikimate metabolic process"/>
    <property type="evidence" value="ECO:0007669"/>
    <property type="project" value="TreeGrafter"/>
</dbReference>
<dbReference type="CDD" id="cd01065">
    <property type="entry name" value="NAD_bind_Shikimate_DH"/>
    <property type="match status" value="1"/>
</dbReference>
<dbReference type="FunFam" id="3.40.50.10860:FF:000004">
    <property type="entry name" value="Quinate/shikimate dehydrogenase"/>
    <property type="match status" value="1"/>
</dbReference>
<dbReference type="FunFam" id="3.40.50.720:FF:000086">
    <property type="entry name" value="Quinate/shikimate dehydrogenase"/>
    <property type="match status" value="1"/>
</dbReference>
<dbReference type="Gene3D" id="3.40.50.10860">
    <property type="entry name" value="Leucine Dehydrogenase, chain A, domain 1"/>
    <property type="match status" value="1"/>
</dbReference>
<dbReference type="Gene3D" id="3.40.50.720">
    <property type="entry name" value="NAD(P)-binding Rossmann-like Domain"/>
    <property type="match status" value="1"/>
</dbReference>
<dbReference type="HAMAP" id="MF_00222">
    <property type="entry name" value="Shikimate_DH_AroE"/>
    <property type="match status" value="1"/>
</dbReference>
<dbReference type="HAMAP" id="MF_01578">
    <property type="entry name" value="Shikimate_DH_YdiB"/>
    <property type="match status" value="1"/>
</dbReference>
<dbReference type="InterPro" id="IPR046346">
    <property type="entry name" value="Aminoacid_DH-like_N_sf"/>
</dbReference>
<dbReference type="InterPro" id="IPR036291">
    <property type="entry name" value="NAD(P)-bd_dom_sf"/>
</dbReference>
<dbReference type="InterPro" id="IPR022872">
    <property type="entry name" value="Quinate/Shikimate_DH"/>
</dbReference>
<dbReference type="InterPro" id="IPR041121">
    <property type="entry name" value="SDH_C"/>
</dbReference>
<dbReference type="InterPro" id="IPR013708">
    <property type="entry name" value="Shikimate_DH-bd_N"/>
</dbReference>
<dbReference type="InterPro" id="IPR022893">
    <property type="entry name" value="Shikimate_DH_fam"/>
</dbReference>
<dbReference type="NCBIfam" id="NF009390">
    <property type="entry name" value="PRK12749.1"/>
    <property type="match status" value="1"/>
</dbReference>
<dbReference type="PANTHER" id="PTHR21089:SF1">
    <property type="entry name" value="BIFUNCTIONAL 3-DEHYDROQUINATE DEHYDRATASE_SHIKIMATE DEHYDROGENASE, CHLOROPLASTIC"/>
    <property type="match status" value="1"/>
</dbReference>
<dbReference type="PANTHER" id="PTHR21089">
    <property type="entry name" value="SHIKIMATE DEHYDROGENASE"/>
    <property type="match status" value="1"/>
</dbReference>
<dbReference type="Pfam" id="PF18317">
    <property type="entry name" value="SDH_C"/>
    <property type="match status" value="1"/>
</dbReference>
<dbReference type="Pfam" id="PF08501">
    <property type="entry name" value="Shikimate_dh_N"/>
    <property type="match status" value="1"/>
</dbReference>
<dbReference type="SUPFAM" id="SSF53223">
    <property type="entry name" value="Aminoacid dehydrogenase-like, N-terminal domain"/>
    <property type="match status" value="1"/>
</dbReference>
<dbReference type="SUPFAM" id="SSF51735">
    <property type="entry name" value="NAD(P)-binding Rossmann-fold domains"/>
    <property type="match status" value="1"/>
</dbReference>
<organism>
    <name type="scientific">Escherichia coli O9:H4 (strain HS)</name>
    <dbReference type="NCBI Taxonomy" id="331112"/>
    <lineage>
        <taxon>Bacteria</taxon>
        <taxon>Pseudomonadati</taxon>
        <taxon>Pseudomonadota</taxon>
        <taxon>Gammaproteobacteria</taxon>
        <taxon>Enterobacterales</taxon>
        <taxon>Enterobacteriaceae</taxon>
        <taxon>Escherichia</taxon>
    </lineage>
</organism>
<proteinExistence type="inferred from homology"/>
<sequence>MDVTAKYELIGLMAYPIRHSLSPEMQNKALEKAGLPFTYMAFEVDNDSFPGAIEGLKALKMRGTGVSMPNKQLACEYVDELTPAAKLVGAINTIVNDDGYLRGYNTDGTGHIRAIKESGFDIKGKTMVLLGAGGASTAIGAQGAIEGLKEIKLFNRRDEFFDKALAFAQRVNENTDCVVTVTDLADQQAFAEALASADILTNGTKVGMKPLENESLVNDISLLHPGLLVTECVYNPHMTKLLQQAQQAGCKTIDGYGMLLWQGAEQFTLWTGKDFPLEYVKQVMGFGA</sequence>
<reference key="1">
    <citation type="journal article" date="2008" name="J. Bacteriol.">
        <title>The pangenome structure of Escherichia coli: comparative genomic analysis of E. coli commensal and pathogenic isolates.</title>
        <authorList>
            <person name="Rasko D.A."/>
            <person name="Rosovitz M.J."/>
            <person name="Myers G.S.A."/>
            <person name="Mongodin E.F."/>
            <person name="Fricke W.F."/>
            <person name="Gajer P."/>
            <person name="Crabtree J."/>
            <person name="Sebaihia M."/>
            <person name="Thomson N.R."/>
            <person name="Chaudhuri R."/>
            <person name="Henderson I.R."/>
            <person name="Sperandio V."/>
            <person name="Ravel J."/>
        </authorList>
    </citation>
    <scope>NUCLEOTIDE SEQUENCE [LARGE SCALE GENOMIC DNA]</scope>
    <source>
        <strain>HS</strain>
    </source>
</reference>
<evidence type="ECO:0000255" key="1">
    <source>
        <dbReference type="HAMAP-Rule" id="MF_01578"/>
    </source>
</evidence>
<gene>
    <name evidence="1" type="primary">ydiB</name>
    <name type="ordered locus">EcHS_A1773</name>
</gene>